<protein>
    <recommendedName>
        <fullName evidence="1">Peptidyl-tRNA hydrolase</fullName>
        <shortName evidence="1">Pth</shortName>
        <ecNumber evidence="1">3.1.1.29</ecNumber>
    </recommendedName>
</protein>
<organism>
    <name type="scientific">Escherichia coli O8 (strain IAI1)</name>
    <dbReference type="NCBI Taxonomy" id="585034"/>
    <lineage>
        <taxon>Bacteria</taxon>
        <taxon>Pseudomonadati</taxon>
        <taxon>Pseudomonadota</taxon>
        <taxon>Gammaproteobacteria</taxon>
        <taxon>Enterobacterales</taxon>
        <taxon>Enterobacteriaceae</taxon>
        <taxon>Escherichia</taxon>
    </lineage>
</organism>
<name>PTH_ECO8A</name>
<proteinExistence type="inferred from homology"/>
<keyword id="KW-0963">Cytoplasm</keyword>
<keyword id="KW-0378">Hydrolase</keyword>
<keyword id="KW-0694">RNA-binding</keyword>
<keyword id="KW-0820">tRNA-binding</keyword>
<comment type="function">
    <text evidence="1">Hydrolyzes ribosome-free peptidyl-tRNAs (with 1 or more amino acids incorporated), which drop off the ribosome during protein synthesis, or as a result of ribosome stalling.</text>
</comment>
<comment type="function">
    <text evidence="1">Catalyzes the release of premature peptidyl moieties from peptidyl-tRNA molecules trapped in stalled 50S ribosomal subunits, and thus maintains levels of free tRNAs and 50S ribosomes.</text>
</comment>
<comment type="catalytic activity">
    <reaction evidence="1">
        <text>an N-acyl-L-alpha-aminoacyl-tRNA + H2O = an N-acyl-L-amino acid + a tRNA + H(+)</text>
        <dbReference type="Rhea" id="RHEA:54448"/>
        <dbReference type="Rhea" id="RHEA-COMP:10123"/>
        <dbReference type="Rhea" id="RHEA-COMP:13883"/>
        <dbReference type="ChEBI" id="CHEBI:15377"/>
        <dbReference type="ChEBI" id="CHEBI:15378"/>
        <dbReference type="ChEBI" id="CHEBI:59874"/>
        <dbReference type="ChEBI" id="CHEBI:78442"/>
        <dbReference type="ChEBI" id="CHEBI:138191"/>
        <dbReference type="EC" id="3.1.1.29"/>
    </reaction>
</comment>
<comment type="subunit">
    <text evidence="1">Monomer.</text>
</comment>
<comment type="subcellular location">
    <subcellularLocation>
        <location evidence="1">Cytoplasm</location>
    </subcellularLocation>
</comment>
<comment type="similarity">
    <text evidence="1">Belongs to the PTH family.</text>
</comment>
<sequence length="194" mass="21082">MTIKLIVGLANPGAEYAATRHNAGAWFVDLLAERLRAPLREEAKFFGYTSRVTLGGEDVRLLVPTTFMNLSGKAVAAMASFFRINPDEILVAHDELDLPPGVAKFKLGGGHGGHNGLKDIISKLGNNPNFHRLRIGIGHPGDKNKVVGFVLGKPPVSEQKLIDEAIDEAARCTEMWFTDGLTKATNRLHAFKAQ</sequence>
<reference key="1">
    <citation type="journal article" date="2009" name="PLoS Genet.">
        <title>Organised genome dynamics in the Escherichia coli species results in highly diverse adaptive paths.</title>
        <authorList>
            <person name="Touchon M."/>
            <person name="Hoede C."/>
            <person name="Tenaillon O."/>
            <person name="Barbe V."/>
            <person name="Baeriswyl S."/>
            <person name="Bidet P."/>
            <person name="Bingen E."/>
            <person name="Bonacorsi S."/>
            <person name="Bouchier C."/>
            <person name="Bouvet O."/>
            <person name="Calteau A."/>
            <person name="Chiapello H."/>
            <person name="Clermont O."/>
            <person name="Cruveiller S."/>
            <person name="Danchin A."/>
            <person name="Diard M."/>
            <person name="Dossat C."/>
            <person name="Karoui M.E."/>
            <person name="Frapy E."/>
            <person name="Garry L."/>
            <person name="Ghigo J.M."/>
            <person name="Gilles A.M."/>
            <person name="Johnson J."/>
            <person name="Le Bouguenec C."/>
            <person name="Lescat M."/>
            <person name="Mangenot S."/>
            <person name="Martinez-Jehanne V."/>
            <person name="Matic I."/>
            <person name="Nassif X."/>
            <person name="Oztas S."/>
            <person name="Petit M.A."/>
            <person name="Pichon C."/>
            <person name="Rouy Z."/>
            <person name="Ruf C.S."/>
            <person name="Schneider D."/>
            <person name="Tourret J."/>
            <person name="Vacherie B."/>
            <person name="Vallenet D."/>
            <person name="Medigue C."/>
            <person name="Rocha E.P.C."/>
            <person name="Denamur E."/>
        </authorList>
    </citation>
    <scope>NUCLEOTIDE SEQUENCE [LARGE SCALE GENOMIC DNA]</scope>
    <source>
        <strain>IAI1</strain>
    </source>
</reference>
<accession>B7LXB9</accession>
<feature type="chain" id="PRO_1000192970" description="Peptidyl-tRNA hydrolase">
    <location>
        <begin position="1"/>
        <end position="194"/>
    </location>
</feature>
<feature type="active site" description="Proton acceptor" evidence="1">
    <location>
        <position position="21"/>
    </location>
</feature>
<feature type="binding site" evidence="1">
    <location>
        <position position="16"/>
    </location>
    <ligand>
        <name>tRNA</name>
        <dbReference type="ChEBI" id="CHEBI:17843"/>
    </ligand>
</feature>
<feature type="binding site" evidence="1">
    <location>
        <position position="67"/>
    </location>
    <ligand>
        <name>tRNA</name>
        <dbReference type="ChEBI" id="CHEBI:17843"/>
    </ligand>
</feature>
<feature type="binding site" evidence="1">
    <location>
        <position position="69"/>
    </location>
    <ligand>
        <name>tRNA</name>
        <dbReference type="ChEBI" id="CHEBI:17843"/>
    </ligand>
</feature>
<feature type="binding site" evidence="1">
    <location>
        <position position="115"/>
    </location>
    <ligand>
        <name>tRNA</name>
        <dbReference type="ChEBI" id="CHEBI:17843"/>
    </ligand>
</feature>
<feature type="site" description="Discriminates between blocked and unblocked aminoacyl-tRNA" evidence="1">
    <location>
        <position position="11"/>
    </location>
</feature>
<feature type="site" description="Stabilizes the basic form of H active site to accept a proton" evidence="1">
    <location>
        <position position="94"/>
    </location>
</feature>
<dbReference type="EC" id="3.1.1.29" evidence="1"/>
<dbReference type="EMBL" id="CU928160">
    <property type="protein sequence ID" value="CAQ98084.1"/>
    <property type="molecule type" value="Genomic_DNA"/>
</dbReference>
<dbReference type="RefSeq" id="WP_000152933.1">
    <property type="nucleotide sequence ID" value="NC_011741.1"/>
</dbReference>
<dbReference type="SMR" id="B7LXB9"/>
<dbReference type="GeneID" id="93775269"/>
<dbReference type="KEGG" id="ecr:ECIAI1_1225"/>
<dbReference type="HOGENOM" id="CLU_062456_3_1_6"/>
<dbReference type="GO" id="GO:0005737">
    <property type="term" value="C:cytoplasm"/>
    <property type="evidence" value="ECO:0007669"/>
    <property type="project" value="UniProtKB-SubCell"/>
</dbReference>
<dbReference type="GO" id="GO:0004045">
    <property type="term" value="F:peptidyl-tRNA hydrolase activity"/>
    <property type="evidence" value="ECO:0007669"/>
    <property type="project" value="UniProtKB-UniRule"/>
</dbReference>
<dbReference type="GO" id="GO:0000049">
    <property type="term" value="F:tRNA binding"/>
    <property type="evidence" value="ECO:0007669"/>
    <property type="project" value="UniProtKB-UniRule"/>
</dbReference>
<dbReference type="GO" id="GO:0006515">
    <property type="term" value="P:protein quality control for misfolded or incompletely synthesized proteins"/>
    <property type="evidence" value="ECO:0007669"/>
    <property type="project" value="UniProtKB-UniRule"/>
</dbReference>
<dbReference type="GO" id="GO:0072344">
    <property type="term" value="P:rescue of stalled ribosome"/>
    <property type="evidence" value="ECO:0007669"/>
    <property type="project" value="UniProtKB-UniRule"/>
</dbReference>
<dbReference type="CDD" id="cd00462">
    <property type="entry name" value="PTH"/>
    <property type="match status" value="1"/>
</dbReference>
<dbReference type="FunFam" id="3.40.50.1470:FF:000001">
    <property type="entry name" value="Peptidyl-tRNA hydrolase"/>
    <property type="match status" value="1"/>
</dbReference>
<dbReference type="Gene3D" id="3.40.50.1470">
    <property type="entry name" value="Peptidyl-tRNA hydrolase"/>
    <property type="match status" value="1"/>
</dbReference>
<dbReference type="HAMAP" id="MF_00083">
    <property type="entry name" value="Pept_tRNA_hydro_bact"/>
    <property type="match status" value="1"/>
</dbReference>
<dbReference type="InterPro" id="IPR001328">
    <property type="entry name" value="Pept_tRNA_hydro"/>
</dbReference>
<dbReference type="InterPro" id="IPR018171">
    <property type="entry name" value="Pept_tRNA_hydro_CS"/>
</dbReference>
<dbReference type="InterPro" id="IPR036416">
    <property type="entry name" value="Pept_tRNA_hydro_sf"/>
</dbReference>
<dbReference type="NCBIfam" id="TIGR00447">
    <property type="entry name" value="pth"/>
    <property type="match status" value="1"/>
</dbReference>
<dbReference type="PANTHER" id="PTHR17224">
    <property type="entry name" value="PEPTIDYL-TRNA HYDROLASE"/>
    <property type="match status" value="1"/>
</dbReference>
<dbReference type="PANTHER" id="PTHR17224:SF1">
    <property type="entry name" value="PEPTIDYL-TRNA HYDROLASE"/>
    <property type="match status" value="1"/>
</dbReference>
<dbReference type="Pfam" id="PF01195">
    <property type="entry name" value="Pept_tRNA_hydro"/>
    <property type="match status" value="1"/>
</dbReference>
<dbReference type="SUPFAM" id="SSF53178">
    <property type="entry name" value="Peptidyl-tRNA hydrolase-like"/>
    <property type="match status" value="1"/>
</dbReference>
<dbReference type="PROSITE" id="PS01195">
    <property type="entry name" value="PEPT_TRNA_HYDROL_1"/>
    <property type="match status" value="1"/>
</dbReference>
<dbReference type="PROSITE" id="PS01196">
    <property type="entry name" value="PEPT_TRNA_HYDROL_2"/>
    <property type="match status" value="1"/>
</dbReference>
<evidence type="ECO:0000255" key="1">
    <source>
        <dbReference type="HAMAP-Rule" id="MF_00083"/>
    </source>
</evidence>
<gene>
    <name evidence="1" type="primary">pth</name>
    <name type="ordered locus">ECIAI1_1225</name>
</gene>